<sequence>MFKRSLKVLLSNPPINRVKPSSTIIQPLSNTTTTTIINNNNITNFEKMTHKKSMTIDNICQNVRNAQYAVRGELVIRAEAISHQLQKQKTEGTKTLPFEEIVYCNIGNPQQLKQKPLTYFRQVVSLVECPDLLDNPYVEKIYPADVISRAKEILGSINNTTGAYSNSQGIGLVLRSVADFIERRDGHKSDPSEIFLTDGASVGVQRILKLLIKDRSDGILIPIPQYPLYSATIELYNGSQLGYLLNEEKGWSLEISQLEHSYNDAVSKGINPRALVIINPGNPTGQCLDRANMEEIVKFCLEKNVVLLADEVYQENVYVKESKPFISFKKVVKDMGGDYADLEMVSFHSVSKGFVGECGKRGGYMELNGVTQDVKAEIYKLASIGLCPNVIGQLVVDLMVRPPVAGEQSHDLYLKERDNIYESLKKRANLLTNALNNLEGVTCNPSEGAMYAFPQIRLPAKAVEYANSIGKAPDAYYCIQLLEATGICVVPGSGFGQKDGTWHFRTTFLPSEEAIEGVCKRIADFHQSFMNKYK</sequence>
<organism>
    <name type="scientific">Dictyostelium discoideum</name>
    <name type="common">Social amoeba</name>
    <dbReference type="NCBI Taxonomy" id="44689"/>
    <lineage>
        <taxon>Eukaryota</taxon>
        <taxon>Amoebozoa</taxon>
        <taxon>Evosea</taxon>
        <taxon>Eumycetozoa</taxon>
        <taxon>Dictyostelia</taxon>
        <taxon>Dictyosteliales</taxon>
        <taxon>Dictyosteliaceae</taxon>
        <taxon>Dictyostelium</taxon>
    </lineage>
</organism>
<evidence type="ECO:0000250" key="1"/>
<evidence type="ECO:0000255" key="2"/>
<evidence type="ECO:0000305" key="3"/>
<gene>
    <name type="primary">gpt</name>
    <name type="ORF">DDB_G0285899</name>
</gene>
<keyword id="KW-0032">Aminotransferase</keyword>
<keyword id="KW-0496">Mitochondrion</keyword>
<keyword id="KW-0663">Pyridoxal phosphate</keyword>
<keyword id="KW-1185">Reference proteome</keyword>
<keyword id="KW-0808">Transferase</keyword>
<keyword id="KW-0809">Transit peptide</keyword>
<comment type="catalytic activity">
    <reaction>
        <text>L-alanine + 2-oxoglutarate = pyruvate + L-glutamate</text>
        <dbReference type="Rhea" id="RHEA:19453"/>
        <dbReference type="ChEBI" id="CHEBI:15361"/>
        <dbReference type="ChEBI" id="CHEBI:16810"/>
        <dbReference type="ChEBI" id="CHEBI:29985"/>
        <dbReference type="ChEBI" id="CHEBI:57972"/>
        <dbReference type="EC" id="2.6.1.2"/>
    </reaction>
</comment>
<comment type="cofactor">
    <cofactor evidence="1">
        <name>pyridoxal 5'-phosphate</name>
        <dbReference type="ChEBI" id="CHEBI:597326"/>
    </cofactor>
</comment>
<comment type="pathway">
    <text>Amino-acid degradation; L-alanine degradation via transaminase pathway; pyruvate from L-alanine: step 1/1.</text>
</comment>
<comment type="subunit">
    <text evidence="1">Homodimer.</text>
</comment>
<comment type="subcellular location">
    <subcellularLocation>
        <location evidence="1">Mitochondrion matrix</location>
    </subcellularLocation>
</comment>
<comment type="similarity">
    <text evidence="3">Belongs to the class-I pyridoxal-phosphate-dependent aminotransferase family. Alanine aminotransferase subfamily.</text>
</comment>
<accession>Q54MJ7</accession>
<name>ALAM_DICDI</name>
<protein>
    <recommendedName>
        <fullName>Probable alanine aminotransferase, mitochondrial</fullName>
        <shortName>ALT</shortName>
        <ecNumber>2.6.1.2</ecNumber>
    </recommendedName>
    <alternativeName>
        <fullName>Glutamate pyruvate transaminase</fullName>
        <shortName>GPT</shortName>
    </alternativeName>
    <alternativeName>
        <fullName>Glutamic--alanine transaminase</fullName>
    </alternativeName>
    <alternativeName>
        <fullName>Glutamic--pyruvic transaminase</fullName>
    </alternativeName>
</protein>
<proteinExistence type="inferred from homology"/>
<dbReference type="EC" id="2.6.1.2"/>
<dbReference type="EMBL" id="AAFI02000082">
    <property type="protein sequence ID" value="EAL64484.1"/>
    <property type="molecule type" value="Genomic_DNA"/>
</dbReference>
<dbReference type="RefSeq" id="XP_637993.1">
    <property type="nucleotide sequence ID" value="XM_632901.1"/>
</dbReference>
<dbReference type="SMR" id="Q54MJ7"/>
<dbReference type="FunCoup" id="Q54MJ7">
    <property type="interactions" value="174"/>
</dbReference>
<dbReference type="STRING" id="44689.Q54MJ7"/>
<dbReference type="PaxDb" id="44689-DDB0232139"/>
<dbReference type="EnsemblProtists" id="EAL64484">
    <property type="protein sequence ID" value="EAL64484"/>
    <property type="gene ID" value="DDB_G0285899"/>
</dbReference>
<dbReference type="GeneID" id="8625344"/>
<dbReference type="KEGG" id="ddi:DDB_G0285899"/>
<dbReference type="dictyBase" id="DDB_G0285899"/>
<dbReference type="VEuPathDB" id="AmoebaDB:DDB_G0285899"/>
<dbReference type="eggNOG" id="KOG0258">
    <property type="taxonomic scope" value="Eukaryota"/>
</dbReference>
<dbReference type="HOGENOM" id="CLU_014254_3_0_1"/>
<dbReference type="InParanoid" id="Q54MJ7"/>
<dbReference type="OMA" id="FGFECPP"/>
<dbReference type="PhylomeDB" id="Q54MJ7"/>
<dbReference type="Reactome" id="R-DDI-70268">
    <property type="pathway name" value="Pyruvate metabolism"/>
</dbReference>
<dbReference type="Reactome" id="R-DDI-8964540">
    <property type="pathway name" value="Alanine metabolism"/>
</dbReference>
<dbReference type="UniPathway" id="UPA00528">
    <property type="reaction ID" value="UER00586"/>
</dbReference>
<dbReference type="PRO" id="PR:Q54MJ7"/>
<dbReference type="Proteomes" id="UP000002195">
    <property type="component" value="Chromosome 4"/>
</dbReference>
<dbReference type="GO" id="GO:0005759">
    <property type="term" value="C:mitochondrial matrix"/>
    <property type="evidence" value="ECO:0007669"/>
    <property type="project" value="UniProtKB-SubCell"/>
</dbReference>
<dbReference type="GO" id="GO:0004021">
    <property type="term" value="F:L-alanine:2-oxoglutarate aminotransferase activity"/>
    <property type="evidence" value="ECO:0007669"/>
    <property type="project" value="UniProtKB-EC"/>
</dbReference>
<dbReference type="GO" id="GO:0030170">
    <property type="term" value="F:pyridoxal phosphate binding"/>
    <property type="evidence" value="ECO:0007669"/>
    <property type="project" value="InterPro"/>
</dbReference>
<dbReference type="GO" id="GO:0009058">
    <property type="term" value="P:biosynthetic process"/>
    <property type="evidence" value="ECO:0007669"/>
    <property type="project" value="InterPro"/>
</dbReference>
<dbReference type="GO" id="GO:0042853">
    <property type="term" value="P:L-alanine catabolic process"/>
    <property type="evidence" value="ECO:0007669"/>
    <property type="project" value="UniProtKB-UniPathway"/>
</dbReference>
<dbReference type="CDD" id="cd00609">
    <property type="entry name" value="AAT_like"/>
    <property type="match status" value="1"/>
</dbReference>
<dbReference type="FunFam" id="1.10.287.1970:FF:000001">
    <property type="entry name" value="Alanine aminotransferase 2"/>
    <property type="match status" value="1"/>
</dbReference>
<dbReference type="FunFam" id="3.90.1150.10:FF:000010">
    <property type="entry name" value="Alanine aminotransferase 2"/>
    <property type="match status" value="1"/>
</dbReference>
<dbReference type="FunFam" id="3.40.640.10:FF:000012">
    <property type="entry name" value="alanine aminotransferase 2"/>
    <property type="match status" value="1"/>
</dbReference>
<dbReference type="Gene3D" id="1.10.287.1970">
    <property type="match status" value="1"/>
</dbReference>
<dbReference type="Gene3D" id="3.90.1150.10">
    <property type="entry name" value="Aspartate Aminotransferase, domain 1"/>
    <property type="match status" value="1"/>
</dbReference>
<dbReference type="Gene3D" id="3.40.640.10">
    <property type="entry name" value="Type I PLP-dependent aspartate aminotransferase-like (Major domain)"/>
    <property type="match status" value="1"/>
</dbReference>
<dbReference type="InterPro" id="IPR045088">
    <property type="entry name" value="ALAT1/2-like"/>
</dbReference>
<dbReference type="InterPro" id="IPR004839">
    <property type="entry name" value="Aminotransferase_I/II_large"/>
</dbReference>
<dbReference type="InterPro" id="IPR015424">
    <property type="entry name" value="PyrdxlP-dep_Trfase"/>
</dbReference>
<dbReference type="InterPro" id="IPR015421">
    <property type="entry name" value="PyrdxlP-dep_Trfase_major"/>
</dbReference>
<dbReference type="InterPro" id="IPR015422">
    <property type="entry name" value="PyrdxlP-dep_Trfase_small"/>
</dbReference>
<dbReference type="PANTHER" id="PTHR11751">
    <property type="entry name" value="ALANINE AMINOTRANSFERASE"/>
    <property type="match status" value="1"/>
</dbReference>
<dbReference type="PANTHER" id="PTHR11751:SF29">
    <property type="entry name" value="ALANINE TRANSAMINASE"/>
    <property type="match status" value="1"/>
</dbReference>
<dbReference type="Pfam" id="PF00155">
    <property type="entry name" value="Aminotran_1_2"/>
    <property type="match status" value="1"/>
</dbReference>
<dbReference type="SUPFAM" id="SSF53383">
    <property type="entry name" value="PLP-dependent transferases"/>
    <property type="match status" value="1"/>
</dbReference>
<reference key="1">
    <citation type="journal article" date="2005" name="Nature">
        <title>The genome of the social amoeba Dictyostelium discoideum.</title>
        <authorList>
            <person name="Eichinger L."/>
            <person name="Pachebat J.A."/>
            <person name="Gloeckner G."/>
            <person name="Rajandream M.A."/>
            <person name="Sucgang R."/>
            <person name="Berriman M."/>
            <person name="Song J."/>
            <person name="Olsen R."/>
            <person name="Szafranski K."/>
            <person name="Xu Q."/>
            <person name="Tunggal B."/>
            <person name="Kummerfeld S."/>
            <person name="Madera M."/>
            <person name="Konfortov B.A."/>
            <person name="Rivero F."/>
            <person name="Bankier A.T."/>
            <person name="Lehmann R."/>
            <person name="Hamlin N."/>
            <person name="Davies R."/>
            <person name="Gaudet P."/>
            <person name="Fey P."/>
            <person name="Pilcher K."/>
            <person name="Chen G."/>
            <person name="Saunders D."/>
            <person name="Sodergren E.J."/>
            <person name="Davis P."/>
            <person name="Kerhornou A."/>
            <person name="Nie X."/>
            <person name="Hall N."/>
            <person name="Anjard C."/>
            <person name="Hemphill L."/>
            <person name="Bason N."/>
            <person name="Farbrother P."/>
            <person name="Desany B."/>
            <person name="Just E."/>
            <person name="Morio T."/>
            <person name="Rost R."/>
            <person name="Churcher C.M."/>
            <person name="Cooper J."/>
            <person name="Haydock S."/>
            <person name="van Driessche N."/>
            <person name="Cronin A."/>
            <person name="Goodhead I."/>
            <person name="Muzny D.M."/>
            <person name="Mourier T."/>
            <person name="Pain A."/>
            <person name="Lu M."/>
            <person name="Harper D."/>
            <person name="Lindsay R."/>
            <person name="Hauser H."/>
            <person name="James K.D."/>
            <person name="Quiles M."/>
            <person name="Madan Babu M."/>
            <person name="Saito T."/>
            <person name="Buchrieser C."/>
            <person name="Wardroper A."/>
            <person name="Felder M."/>
            <person name="Thangavelu M."/>
            <person name="Johnson D."/>
            <person name="Knights A."/>
            <person name="Loulseged H."/>
            <person name="Mungall K.L."/>
            <person name="Oliver K."/>
            <person name="Price C."/>
            <person name="Quail M.A."/>
            <person name="Urushihara H."/>
            <person name="Hernandez J."/>
            <person name="Rabbinowitsch E."/>
            <person name="Steffen D."/>
            <person name="Sanders M."/>
            <person name="Ma J."/>
            <person name="Kohara Y."/>
            <person name="Sharp S."/>
            <person name="Simmonds M.N."/>
            <person name="Spiegler S."/>
            <person name="Tivey A."/>
            <person name="Sugano S."/>
            <person name="White B."/>
            <person name="Walker D."/>
            <person name="Woodward J.R."/>
            <person name="Winckler T."/>
            <person name="Tanaka Y."/>
            <person name="Shaulsky G."/>
            <person name="Schleicher M."/>
            <person name="Weinstock G.M."/>
            <person name="Rosenthal A."/>
            <person name="Cox E.C."/>
            <person name="Chisholm R.L."/>
            <person name="Gibbs R.A."/>
            <person name="Loomis W.F."/>
            <person name="Platzer M."/>
            <person name="Kay R.R."/>
            <person name="Williams J.G."/>
            <person name="Dear P.H."/>
            <person name="Noegel A.A."/>
            <person name="Barrell B.G."/>
            <person name="Kuspa A."/>
        </authorList>
    </citation>
    <scope>NUCLEOTIDE SEQUENCE [LARGE SCALE GENOMIC DNA]</scope>
    <source>
        <strain>AX4</strain>
    </source>
</reference>
<feature type="transit peptide" description="Mitochondrion" evidence="2">
    <location>
        <begin position="1"/>
        <end position="18"/>
    </location>
</feature>
<feature type="chain" id="PRO_0000328384" description="Probable alanine aminotransferase, mitochondrial">
    <location>
        <begin position="19"/>
        <end position="534"/>
    </location>
</feature>
<feature type="modified residue" description="N6-(pyridoxal phosphate)lysine" evidence="1">
    <location>
        <position position="352"/>
    </location>
</feature>